<gene>
    <name evidence="1" type="primary">minE</name>
    <name type="ordered locus">P9515_03521</name>
</gene>
<dbReference type="EMBL" id="CP000552">
    <property type="protein sequence ID" value="ABM71561.1"/>
    <property type="molecule type" value="Genomic_DNA"/>
</dbReference>
<dbReference type="SMR" id="A2BUV0"/>
<dbReference type="STRING" id="167542.P9515_03521"/>
<dbReference type="KEGG" id="pmc:P9515_03521"/>
<dbReference type="eggNOG" id="COG0851">
    <property type="taxonomic scope" value="Bacteria"/>
</dbReference>
<dbReference type="HOGENOM" id="CLU_137929_1_1_3"/>
<dbReference type="OrthoDB" id="9796578at2"/>
<dbReference type="Proteomes" id="UP000001589">
    <property type="component" value="Chromosome"/>
</dbReference>
<dbReference type="GO" id="GO:0051301">
    <property type="term" value="P:cell division"/>
    <property type="evidence" value="ECO:0007669"/>
    <property type="project" value="UniProtKB-KW"/>
</dbReference>
<dbReference type="GO" id="GO:0032955">
    <property type="term" value="P:regulation of division septum assembly"/>
    <property type="evidence" value="ECO:0007669"/>
    <property type="project" value="InterPro"/>
</dbReference>
<dbReference type="Gene3D" id="3.30.1070.10">
    <property type="entry name" value="Cell division topological specificity factor MinE"/>
    <property type="match status" value="1"/>
</dbReference>
<dbReference type="HAMAP" id="MF_00262">
    <property type="entry name" value="MinE"/>
    <property type="match status" value="1"/>
</dbReference>
<dbReference type="InterPro" id="IPR005527">
    <property type="entry name" value="MinE"/>
</dbReference>
<dbReference type="InterPro" id="IPR036707">
    <property type="entry name" value="MinE_sf"/>
</dbReference>
<dbReference type="NCBIfam" id="TIGR01215">
    <property type="entry name" value="minE"/>
    <property type="match status" value="1"/>
</dbReference>
<dbReference type="NCBIfam" id="NF001422">
    <property type="entry name" value="PRK00296.1"/>
    <property type="match status" value="1"/>
</dbReference>
<dbReference type="Pfam" id="PF03776">
    <property type="entry name" value="MinE"/>
    <property type="match status" value="1"/>
</dbReference>
<dbReference type="SUPFAM" id="SSF55229">
    <property type="entry name" value="Cell division protein MinE topological specificity domain"/>
    <property type="match status" value="1"/>
</dbReference>
<evidence type="ECO:0000255" key="1">
    <source>
        <dbReference type="HAMAP-Rule" id="MF_00262"/>
    </source>
</evidence>
<protein>
    <recommendedName>
        <fullName evidence="1">Cell division topological specificity factor</fullName>
    </recommendedName>
</protein>
<proteinExistence type="inferred from homology"/>
<reference key="1">
    <citation type="journal article" date="2007" name="PLoS Genet.">
        <title>Patterns and implications of gene gain and loss in the evolution of Prochlorococcus.</title>
        <authorList>
            <person name="Kettler G.C."/>
            <person name="Martiny A.C."/>
            <person name="Huang K."/>
            <person name="Zucker J."/>
            <person name="Coleman M.L."/>
            <person name="Rodrigue S."/>
            <person name="Chen F."/>
            <person name="Lapidus A."/>
            <person name="Ferriera S."/>
            <person name="Johnson J."/>
            <person name="Steglich C."/>
            <person name="Church G.M."/>
            <person name="Richardson P."/>
            <person name="Chisholm S.W."/>
        </authorList>
    </citation>
    <scope>NUCLEOTIDE SEQUENCE [LARGE SCALE GENOMIC DNA]</scope>
    <source>
        <strain>MIT 9515</strain>
    </source>
</reference>
<accession>A2BUV0</accession>
<sequence>MTLRDLINKLLGRETSSANTARERLQLVLAHDRVDMSSLTTDLLDKMRKEILDVVAKYVEIDFEEVAVSLETEDRMTALVANLPIKRTLTGEIEFKKNHDNPKKK</sequence>
<comment type="function">
    <text evidence="1">Prevents the cell division inhibition by proteins MinC and MinD at internal division sites while permitting inhibition at polar sites. This ensures cell division at the proper site by restricting the formation of a division septum at the midpoint of the long axis of the cell.</text>
</comment>
<comment type="similarity">
    <text evidence="1">Belongs to the MinE family.</text>
</comment>
<organism>
    <name type="scientific">Prochlorococcus marinus (strain MIT 9515)</name>
    <dbReference type="NCBI Taxonomy" id="167542"/>
    <lineage>
        <taxon>Bacteria</taxon>
        <taxon>Bacillati</taxon>
        <taxon>Cyanobacteriota</taxon>
        <taxon>Cyanophyceae</taxon>
        <taxon>Synechococcales</taxon>
        <taxon>Prochlorococcaceae</taxon>
        <taxon>Prochlorococcus</taxon>
    </lineage>
</organism>
<name>MINE_PROM5</name>
<feature type="chain" id="PRO_0000298153" description="Cell division topological specificity factor">
    <location>
        <begin position="1"/>
        <end position="105"/>
    </location>
</feature>
<keyword id="KW-0131">Cell cycle</keyword>
<keyword id="KW-0132">Cell division</keyword>